<accession>P66558</accession>
<accession>P59185</accession>
<accession>Q8K8X2</accession>
<accession>Q9A1W8</accession>
<gene>
    <name evidence="1" type="primary">rpsC</name>
    <name type="ordered locus">gbs0064</name>
</gene>
<proteinExistence type="inferred from homology"/>
<sequence>MGQKVHPIGMRVGIIRDWDAKWYAEKEYADYLHEDLAIRKFINKELADASVSTIEIERAVNKVIVSLHTAKPGMVIGKGGANVDALRGQLNKLTGKQVHINIIEIKQPDLDAHLVGENIARQLEQRVAFRRAQKQAIQRTMRAGAKGIKTQVSGRLNGADIARAEGYSEGTVPLHTLRADIDYAWEEADTTYGKLGVKVWIYRGEVLPARKNTKGGK</sequence>
<feature type="chain" id="PRO_0000130214" description="Small ribosomal subunit protein uS3">
    <location>
        <begin position="1"/>
        <end position="217"/>
    </location>
</feature>
<feature type="domain" description="KH type-2" evidence="1">
    <location>
        <begin position="38"/>
        <end position="106"/>
    </location>
</feature>
<dbReference type="EMBL" id="AL766843">
    <property type="protein sequence ID" value="CAD45709.1"/>
    <property type="molecule type" value="Genomic_DNA"/>
</dbReference>
<dbReference type="RefSeq" id="WP_000529929.1">
    <property type="nucleotide sequence ID" value="NC_004368.1"/>
</dbReference>
<dbReference type="SMR" id="P66558"/>
<dbReference type="GeneID" id="69900032"/>
<dbReference type="KEGG" id="san:rpsC"/>
<dbReference type="eggNOG" id="COG0092">
    <property type="taxonomic scope" value="Bacteria"/>
</dbReference>
<dbReference type="HOGENOM" id="CLU_058591_0_2_9"/>
<dbReference type="Proteomes" id="UP000000823">
    <property type="component" value="Chromosome"/>
</dbReference>
<dbReference type="GO" id="GO:0022627">
    <property type="term" value="C:cytosolic small ribosomal subunit"/>
    <property type="evidence" value="ECO:0007669"/>
    <property type="project" value="TreeGrafter"/>
</dbReference>
<dbReference type="GO" id="GO:0003729">
    <property type="term" value="F:mRNA binding"/>
    <property type="evidence" value="ECO:0007669"/>
    <property type="project" value="UniProtKB-UniRule"/>
</dbReference>
<dbReference type="GO" id="GO:0019843">
    <property type="term" value="F:rRNA binding"/>
    <property type="evidence" value="ECO:0007669"/>
    <property type="project" value="UniProtKB-UniRule"/>
</dbReference>
<dbReference type="GO" id="GO:0003735">
    <property type="term" value="F:structural constituent of ribosome"/>
    <property type="evidence" value="ECO:0007669"/>
    <property type="project" value="InterPro"/>
</dbReference>
<dbReference type="GO" id="GO:0006412">
    <property type="term" value="P:translation"/>
    <property type="evidence" value="ECO:0007669"/>
    <property type="project" value="UniProtKB-UniRule"/>
</dbReference>
<dbReference type="CDD" id="cd02412">
    <property type="entry name" value="KH-II_30S_S3"/>
    <property type="match status" value="1"/>
</dbReference>
<dbReference type="FunFam" id="3.30.1140.32:FF:000001">
    <property type="entry name" value="30S ribosomal protein S3"/>
    <property type="match status" value="1"/>
</dbReference>
<dbReference type="FunFam" id="3.30.300.20:FF:000001">
    <property type="entry name" value="30S ribosomal protein S3"/>
    <property type="match status" value="1"/>
</dbReference>
<dbReference type="Gene3D" id="3.30.300.20">
    <property type="match status" value="1"/>
</dbReference>
<dbReference type="Gene3D" id="3.30.1140.32">
    <property type="entry name" value="Ribosomal protein S3, C-terminal domain"/>
    <property type="match status" value="1"/>
</dbReference>
<dbReference type="HAMAP" id="MF_01309_B">
    <property type="entry name" value="Ribosomal_uS3_B"/>
    <property type="match status" value="1"/>
</dbReference>
<dbReference type="InterPro" id="IPR004087">
    <property type="entry name" value="KH_dom"/>
</dbReference>
<dbReference type="InterPro" id="IPR015946">
    <property type="entry name" value="KH_dom-like_a/b"/>
</dbReference>
<dbReference type="InterPro" id="IPR004044">
    <property type="entry name" value="KH_dom_type_2"/>
</dbReference>
<dbReference type="InterPro" id="IPR009019">
    <property type="entry name" value="KH_sf_prok-type"/>
</dbReference>
<dbReference type="InterPro" id="IPR036419">
    <property type="entry name" value="Ribosomal_S3_C_sf"/>
</dbReference>
<dbReference type="InterPro" id="IPR005704">
    <property type="entry name" value="Ribosomal_uS3_bac-typ"/>
</dbReference>
<dbReference type="InterPro" id="IPR001351">
    <property type="entry name" value="Ribosomal_uS3_C"/>
</dbReference>
<dbReference type="InterPro" id="IPR018280">
    <property type="entry name" value="Ribosomal_uS3_CS"/>
</dbReference>
<dbReference type="NCBIfam" id="TIGR01009">
    <property type="entry name" value="rpsC_bact"/>
    <property type="match status" value="1"/>
</dbReference>
<dbReference type="PANTHER" id="PTHR11760">
    <property type="entry name" value="30S/40S RIBOSOMAL PROTEIN S3"/>
    <property type="match status" value="1"/>
</dbReference>
<dbReference type="PANTHER" id="PTHR11760:SF19">
    <property type="entry name" value="SMALL RIBOSOMAL SUBUNIT PROTEIN US3C"/>
    <property type="match status" value="1"/>
</dbReference>
<dbReference type="Pfam" id="PF07650">
    <property type="entry name" value="KH_2"/>
    <property type="match status" value="1"/>
</dbReference>
<dbReference type="Pfam" id="PF00189">
    <property type="entry name" value="Ribosomal_S3_C"/>
    <property type="match status" value="1"/>
</dbReference>
<dbReference type="SMART" id="SM00322">
    <property type="entry name" value="KH"/>
    <property type="match status" value="1"/>
</dbReference>
<dbReference type="SUPFAM" id="SSF54814">
    <property type="entry name" value="Prokaryotic type KH domain (KH-domain type II)"/>
    <property type="match status" value="1"/>
</dbReference>
<dbReference type="SUPFAM" id="SSF54821">
    <property type="entry name" value="Ribosomal protein S3 C-terminal domain"/>
    <property type="match status" value="1"/>
</dbReference>
<dbReference type="PROSITE" id="PS50823">
    <property type="entry name" value="KH_TYPE_2"/>
    <property type="match status" value="1"/>
</dbReference>
<dbReference type="PROSITE" id="PS00548">
    <property type="entry name" value="RIBOSOMAL_S3"/>
    <property type="match status" value="1"/>
</dbReference>
<comment type="function">
    <text evidence="1">Binds the lower part of the 30S subunit head. Binds mRNA in the 70S ribosome, positioning it for translation.</text>
</comment>
<comment type="subunit">
    <text evidence="1">Part of the 30S ribosomal subunit. Forms a tight complex with proteins S10 and S14.</text>
</comment>
<comment type="similarity">
    <text evidence="1">Belongs to the universal ribosomal protein uS3 family.</text>
</comment>
<evidence type="ECO:0000255" key="1">
    <source>
        <dbReference type="HAMAP-Rule" id="MF_01309"/>
    </source>
</evidence>
<evidence type="ECO:0000305" key="2"/>
<reference key="1">
    <citation type="journal article" date="2002" name="Mol. Microbiol.">
        <title>Genome sequence of Streptococcus agalactiae, a pathogen causing invasive neonatal disease.</title>
        <authorList>
            <person name="Glaser P."/>
            <person name="Rusniok C."/>
            <person name="Buchrieser C."/>
            <person name="Chevalier F."/>
            <person name="Frangeul L."/>
            <person name="Msadek T."/>
            <person name="Zouine M."/>
            <person name="Couve E."/>
            <person name="Lalioui L."/>
            <person name="Poyart C."/>
            <person name="Trieu-Cuot P."/>
            <person name="Kunst F."/>
        </authorList>
    </citation>
    <scope>NUCLEOTIDE SEQUENCE [LARGE SCALE GENOMIC DNA]</scope>
    <source>
        <strain>NEM316</strain>
    </source>
</reference>
<protein>
    <recommendedName>
        <fullName evidence="1">Small ribosomal subunit protein uS3</fullName>
    </recommendedName>
    <alternativeName>
        <fullName evidence="2">30S ribosomal protein S3</fullName>
    </alternativeName>
</protein>
<name>RS3_STRA3</name>
<keyword id="KW-0687">Ribonucleoprotein</keyword>
<keyword id="KW-0689">Ribosomal protein</keyword>
<keyword id="KW-0694">RNA-binding</keyword>
<keyword id="KW-0699">rRNA-binding</keyword>
<organism>
    <name type="scientific">Streptococcus agalactiae serotype III (strain NEM316)</name>
    <dbReference type="NCBI Taxonomy" id="211110"/>
    <lineage>
        <taxon>Bacteria</taxon>
        <taxon>Bacillati</taxon>
        <taxon>Bacillota</taxon>
        <taxon>Bacilli</taxon>
        <taxon>Lactobacillales</taxon>
        <taxon>Streptococcaceae</taxon>
        <taxon>Streptococcus</taxon>
    </lineage>
</organism>